<reference key="1">
    <citation type="journal article" date="2006" name="Proc. Natl. Acad. Sci. U.S.A.">
        <title>Identification of genes subject to positive selection in uropathogenic strains of Escherichia coli: a comparative genomics approach.</title>
        <authorList>
            <person name="Chen S.L."/>
            <person name="Hung C.-S."/>
            <person name="Xu J."/>
            <person name="Reigstad C.S."/>
            <person name="Magrini V."/>
            <person name="Sabo A."/>
            <person name="Blasiar D."/>
            <person name="Bieri T."/>
            <person name="Meyer R.R."/>
            <person name="Ozersky P."/>
            <person name="Armstrong J.R."/>
            <person name="Fulton R.S."/>
            <person name="Latreille J.P."/>
            <person name="Spieth J."/>
            <person name="Hooton T.M."/>
            <person name="Mardis E.R."/>
            <person name="Hultgren S.J."/>
            <person name="Gordon J.I."/>
        </authorList>
    </citation>
    <scope>NUCLEOTIDE SEQUENCE [LARGE SCALE GENOMIC DNA]</scope>
    <source>
        <strain>UTI89 / UPEC</strain>
    </source>
</reference>
<name>HEM1_ECOUT</name>
<feature type="chain" id="PRO_0000335031" description="Glutamyl-tRNA reductase">
    <location>
        <begin position="1"/>
        <end position="418"/>
    </location>
</feature>
<feature type="active site" description="Nucleophile" evidence="1">
    <location>
        <position position="50"/>
    </location>
</feature>
<feature type="binding site" evidence="1">
    <location>
        <begin position="49"/>
        <end position="52"/>
    </location>
    <ligand>
        <name>substrate</name>
    </ligand>
</feature>
<feature type="binding site" evidence="1">
    <location>
        <position position="109"/>
    </location>
    <ligand>
        <name>substrate</name>
    </ligand>
</feature>
<feature type="binding site" evidence="1">
    <location>
        <begin position="114"/>
        <end position="116"/>
    </location>
    <ligand>
        <name>substrate</name>
    </ligand>
</feature>
<feature type="binding site" evidence="1">
    <location>
        <position position="120"/>
    </location>
    <ligand>
        <name>substrate</name>
    </ligand>
</feature>
<feature type="binding site" evidence="1">
    <location>
        <begin position="189"/>
        <end position="194"/>
    </location>
    <ligand>
        <name>NADP(+)</name>
        <dbReference type="ChEBI" id="CHEBI:58349"/>
    </ligand>
</feature>
<feature type="site" description="Important for activity" evidence="1">
    <location>
        <position position="99"/>
    </location>
</feature>
<dbReference type="EC" id="1.2.1.70" evidence="1"/>
<dbReference type="EMBL" id="CP000243">
    <property type="protein sequence ID" value="ABE06886.1"/>
    <property type="status" value="ALT_INIT"/>
    <property type="molecule type" value="Genomic_DNA"/>
</dbReference>
<dbReference type="RefSeq" id="WP_000173201.1">
    <property type="nucleotide sequence ID" value="NZ_CP064825.1"/>
</dbReference>
<dbReference type="SMR" id="Q1RCM8"/>
<dbReference type="KEGG" id="eci:UTI89_C1404"/>
<dbReference type="HOGENOM" id="CLU_035113_2_2_6"/>
<dbReference type="UniPathway" id="UPA00251">
    <property type="reaction ID" value="UER00316"/>
</dbReference>
<dbReference type="Proteomes" id="UP000001952">
    <property type="component" value="Chromosome"/>
</dbReference>
<dbReference type="GO" id="GO:0008883">
    <property type="term" value="F:glutamyl-tRNA reductase activity"/>
    <property type="evidence" value="ECO:0007669"/>
    <property type="project" value="UniProtKB-UniRule"/>
</dbReference>
<dbReference type="GO" id="GO:0050661">
    <property type="term" value="F:NADP binding"/>
    <property type="evidence" value="ECO:0007669"/>
    <property type="project" value="InterPro"/>
</dbReference>
<dbReference type="GO" id="GO:0019353">
    <property type="term" value="P:protoporphyrinogen IX biosynthetic process from glutamate"/>
    <property type="evidence" value="ECO:0007669"/>
    <property type="project" value="TreeGrafter"/>
</dbReference>
<dbReference type="CDD" id="cd05213">
    <property type="entry name" value="NAD_bind_Glutamyl_tRNA_reduct"/>
    <property type="match status" value="1"/>
</dbReference>
<dbReference type="FunFam" id="3.30.460.30:FF:000001">
    <property type="entry name" value="Glutamyl-tRNA reductase"/>
    <property type="match status" value="1"/>
</dbReference>
<dbReference type="FunFam" id="3.40.50.720:FF:000031">
    <property type="entry name" value="Glutamyl-tRNA reductase"/>
    <property type="match status" value="1"/>
</dbReference>
<dbReference type="Gene3D" id="3.30.460.30">
    <property type="entry name" value="Glutamyl-tRNA reductase, N-terminal domain"/>
    <property type="match status" value="1"/>
</dbReference>
<dbReference type="Gene3D" id="3.40.50.720">
    <property type="entry name" value="NAD(P)-binding Rossmann-like Domain"/>
    <property type="match status" value="1"/>
</dbReference>
<dbReference type="HAMAP" id="MF_00087">
    <property type="entry name" value="Glu_tRNA_reductase"/>
    <property type="match status" value="1"/>
</dbReference>
<dbReference type="InterPro" id="IPR000343">
    <property type="entry name" value="4pyrrol_synth_GluRdtase"/>
</dbReference>
<dbReference type="InterPro" id="IPR015896">
    <property type="entry name" value="4pyrrol_synth_GluRdtase_dimer"/>
</dbReference>
<dbReference type="InterPro" id="IPR015895">
    <property type="entry name" value="4pyrrol_synth_GluRdtase_N"/>
</dbReference>
<dbReference type="InterPro" id="IPR018214">
    <property type="entry name" value="GluRdtase_CS"/>
</dbReference>
<dbReference type="InterPro" id="IPR036453">
    <property type="entry name" value="GluRdtase_dimer_dom_sf"/>
</dbReference>
<dbReference type="InterPro" id="IPR036343">
    <property type="entry name" value="GluRdtase_N_sf"/>
</dbReference>
<dbReference type="InterPro" id="IPR036291">
    <property type="entry name" value="NAD(P)-bd_dom_sf"/>
</dbReference>
<dbReference type="InterPro" id="IPR006151">
    <property type="entry name" value="Shikm_DH/Glu-tRNA_Rdtase"/>
</dbReference>
<dbReference type="NCBIfam" id="TIGR01035">
    <property type="entry name" value="hemA"/>
    <property type="match status" value="1"/>
</dbReference>
<dbReference type="PANTHER" id="PTHR43013">
    <property type="entry name" value="GLUTAMYL-TRNA REDUCTASE"/>
    <property type="match status" value="1"/>
</dbReference>
<dbReference type="PANTHER" id="PTHR43013:SF1">
    <property type="entry name" value="GLUTAMYL-TRNA REDUCTASE"/>
    <property type="match status" value="1"/>
</dbReference>
<dbReference type="Pfam" id="PF00745">
    <property type="entry name" value="GlutR_dimer"/>
    <property type="match status" value="1"/>
</dbReference>
<dbReference type="Pfam" id="PF05201">
    <property type="entry name" value="GlutR_N"/>
    <property type="match status" value="1"/>
</dbReference>
<dbReference type="Pfam" id="PF01488">
    <property type="entry name" value="Shikimate_DH"/>
    <property type="match status" value="1"/>
</dbReference>
<dbReference type="PIRSF" id="PIRSF000445">
    <property type="entry name" value="4pyrrol_synth_GluRdtase"/>
    <property type="match status" value="1"/>
</dbReference>
<dbReference type="SUPFAM" id="SSF69742">
    <property type="entry name" value="Glutamyl tRNA-reductase catalytic, N-terminal domain"/>
    <property type="match status" value="1"/>
</dbReference>
<dbReference type="SUPFAM" id="SSF69075">
    <property type="entry name" value="Glutamyl tRNA-reductase dimerization domain"/>
    <property type="match status" value="1"/>
</dbReference>
<dbReference type="SUPFAM" id="SSF51735">
    <property type="entry name" value="NAD(P)-binding Rossmann-fold domains"/>
    <property type="match status" value="1"/>
</dbReference>
<dbReference type="PROSITE" id="PS00747">
    <property type="entry name" value="GLUTR"/>
    <property type="match status" value="1"/>
</dbReference>
<comment type="function">
    <text evidence="1">Catalyzes the NADPH-dependent reduction of glutamyl-tRNA(Glu) to glutamate 1-semialdehyde (GSA).</text>
</comment>
<comment type="catalytic activity">
    <reaction evidence="1">
        <text>(S)-4-amino-5-oxopentanoate + tRNA(Glu) + NADP(+) = L-glutamyl-tRNA(Glu) + NADPH + H(+)</text>
        <dbReference type="Rhea" id="RHEA:12344"/>
        <dbReference type="Rhea" id="RHEA-COMP:9663"/>
        <dbReference type="Rhea" id="RHEA-COMP:9680"/>
        <dbReference type="ChEBI" id="CHEBI:15378"/>
        <dbReference type="ChEBI" id="CHEBI:57501"/>
        <dbReference type="ChEBI" id="CHEBI:57783"/>
        <dbReference type="ChEBI" id="CHEBI:58349"/>
        <dbReference type="ChEBI" id="CHEBI:78442"/>
        <dbReference type="ChEBI" id="CHEBI:78520"/>
        <dbReference type="EC" id="1.2.1.70"/>
    </reaction>
</comment>
<comment type="pathway">
    <text evidence="1">Porphyrin-containing compound metabolism; protoporphyrin-IX biosynthesis; 5-aminolevulinate from L-glutamyl-tRNA(Glu): step 1/2.</text>
</comment>
<comment type="subunit">
    <text evidence="1">Homodimer.</text>
</comment>
<comment type="domain">
    <text evidence="1">Possesses an unusual extended V-shaped dimeric structure with each monomer consisting of three distinct domains arranged along a curved 'spinal' alpha-helix. The N-terminal catalytic domain specifically recognizes the glutamate moiety of the substrate. The second domain is the NADPH-binding domain, and the third C-terminal domain is responsible for dimerization.</text>
</comment>
<comment type="miscellaneous">
    <text evidence="1">During catalysis, the active site Cys acts as a nucleophile attacking the alpha-carbonyl group of tRNA-bound glutamate with the formation of a thioester intermediate between enzyme and glutamate, and the concomitant release of tRNA(Glu). The thioester intermediate is finally reduced by direct hydride transfer from NADPH, to form the product GSA.</text>
</comment>
<comment type="similarity">
    <text evidence="1">Belongs to the glutamyl-tRNA reductase family.</text>
</comment>
<comment type="sequence caution" evidence="2">
    <conflict type="erroneous initiation">
        <sequence resource="EMBL-CDS" id="ABE06886"/>
    </conflict>
</comment>
<sequence length="418" mass="46294">MTLLALGINHKTAPVSLRERVSFSPDKLDQALDSLLAQPMVQGGVVLSTCNRTELYLSVEERDDLQEALIRWLCDYHNLNEDDLRNSLYWHQDNDAVSHLMRVASGLDSLVLGEPQILGQVKKAFADSQKGHMKASELERMFQKSFSVAKRVRTETDIGASAVSVAFAACTLARQIFESLSTVTVLLVGAGETIELVARHLREHKVQKMIIANRTRERAQILADEVGAEVIALSDIDERLREADIIISSTASPLPIIGKGMVERALKSRRNQPMLLVDIAVPRDVEPEVGKLANAYLYSVDDLQSIISHNLAQRKAAAVEAETIVAQEASEFMAWLRAQSASETIRDYRSQAEQVRDELTAKALAALEQGGDAQTIMQDLAWKLTNRLIHAPTKSLQQAARDGDNERLNILRDSLGLE</sequence>
<protein>
    <recommendedName>
        <fullName evidence="1">Glutamyl-tRNA reductase</fullName>
        <shortName evidence="1">GluTR</shortName>
        <ecNumber evidence="1">1.2.1.70</ecNumber>
    </recommendedName>
</protein>
<gene>
    <name evidence="1" type="primary">hemA</name>
    <name type="ordered locus">UTI89_C1404</name>
</gene>
<proteinExistence type="inferred from homology"/>
<evidence type="ECO:0000255" key="1">
    <source>
        <dbReference type="HAMAP-Rule" id="MF_00087"/>
    </source>
</evidence>
<evidence type="ECO:0000305" key="2"/>
<organism>
    <name type="scientific">Escherichia coli (strain UTI89 / UPEC)</name>
    <dbReference type="NCBI Taxonomy" id="364106"/>
    <lineage>
        <taxon>Bacteria</taxon>
        <taxon>Pseudomonadati</taxon>
        <taxon>Pseudomonadota</taxon>
        <taxon>Gammaproteobacteria</taxon>
        <taxon>Enterobacterales</taxon>
        <taxon>Enterobacteriaceae</taxon>
        <taxon>Escherichia</taxon>
    </lineage>
</organism>
<keyword id="KW-0521">NADP</keyword>
<keyword id="KW-0560">Oxidoreductase</keyword>
<keyword id="KW-0627">Porphyrin biosynthesis</keyword>
<accession>Q1RCM8</accession>